<comment type="function">
    <text evidence="6">Protein-histidine N-methyltransferase that specifically mediates 3-methylhistidine (tele-methylhistidine) methylation of actin at 'His-73' (PubMed:30626964). Histidine methylation of actin is required for smooth muscle contraction of the laboring uterus during delivery (PubMed:30626964). Does not have protein-lysine N-methyltransferase activity and probably only catalyzes histidine methylation of actin (PubMed:30626964).</text>
</comment>
<comment type="catalytic activity">
    <reaction evidence="6">
        <text>L-histidyl-[protein] + S-adenosyl-L-methionine = N(tele)-methyl-L-histidyl-[protein] + S-adenosyl-L-homocysteine + H(+)</text>
        <dbReference type="Rhea" id="RHEA:19369"/>
        <dbReference type="Rhea" id="RHEA-COMP:9745"/>
        <dbReference type="Rhea" id="RHEA-COMP:11600"/>
        <dbReference type="ChEBI" id="CHEBI:15378"/>
        <dbReference type="ChEBI" id="CHEBI:16367"/>
        <dbReference type="ChEBI" id="CHEBI:29979"/>
        <dbReference type="ChEBI" id="CHEBI:57856"/>
        <dbReference type="ChEBI" id="CHEBI:59789"/>
        <dbReference type="EC" id="2.1.1.85"/>
    </reaction>
    <physiologicalReaction direction="left-to-right" evidence="6">
        <dbReference type="Rhea" id="RHEA:19370"/>
    </physiologicalReaction>
</comment>
<comment type="subunit">
    <text evidence="5">Interacts with MYOD1.</text>
</comment>
<comment type="subcellular location">
    <subcellularLocation>
        <location evidence="1">Cytoplasm</location>
    </subcellularLocation>
    <subcellularLocation>
        <location evidence="5">Nucleus</location>
    </subcellularLocation>
    <text evidence="1">Localizes mainly in the cytoplasm.</text>
</comment>
<comment type="alternative products">
    <event type="alternative splicing"/>
    <isoform>
        <id>Q91WC0-1</id>
        <name>1</name>
        <sequence type="displayed"/>
    </isoform>
    <isoform>
        <id>Q91WC0-2</id>
        <name>2</name>
        <sequence type="described" ref="VSP_021195 VSP_021196"/>
    </isoform>
    <isoform>
        <id>Q91WC0-3</id>
        <name>3</name>
        <sequence type="described" ref="VSP_021194"/>
    </isoform>
    <isoform>
        <id>Q91WC0-4</id>
        <name>4</name>
        <sequence type="described" ref="VSP_021195 VSP_021197 VSP_021198"/>
    </isoform>
</comment>
<comment type="tissue specificity">
    <text evidence="5">Prominently expressed in the heart and skeletal muscles and is also detected weakly in the stomach, small intestine, and colon.</text>
</comment>
<comment type="induction">
    <text evidence="7">Expression is repressed by microRNAs miR-15b and miR-322, repressing muscle cell differentiation.</text>
</comment>
<comment type="domain">
    <text evidence="1">The SET domain specifically recognizes and binds actin, suggesting that it does not accommodate substrates diverging from actin.</text>
</comment>
<comment type="PTM">
    <text evidence="1">Phosphorylated by GSK3B, which is required for recognition by the SCF(FBXW7) complex and subsequent degradation.</text>
</comment>
<comment type="PTM">
    <text evidence="1">Ubiquitinated by the SCF(FBXW7) complex following phosphorylation by GSK3B, leading to its degradation by the proteasome.</text>
</comment>
<comment type="disruption phenotype">
    <text evidence="6">Mice are viable, but females display severely decreased litter sizes due to primary maternal dystocia (delayed parturition) that is refractory to ecbolic induction agents (PubMed:30626964). Cells show complete loss of actin histidine methylation (PubMed:30626964).</text>
</comment>
<comment type="similarity">
    <text evidence="3">Belongs to the class V-like SAM-binding methyltransferase superfamily. SETD3 actin-histidine methyltransferase family.</text>
</comment>
<comment type="caution">
    <text evidence="5 6">Was initially reported to have histone methyltransferase activity and methylate 'Lys-4' and 'Lys-36' of histone H3 (H3K4me and H3K36me) (PubMed:21832073). However, this conclusion was based on mass spectrometry data wherin mass shifts were inconsistent with a bona fide methylation event and the histone methyltransferase activity could not be confirmed (PubMed:30626964).</text>
</comment>
<protein>
    <recommendedName>
        <fullName evidence="11">Actin-histidine N-methyltransferase</fullName>
        <ecNumber evidence="6">2.1.1.85</ecNumber>
    </recommendedName>
    <alternativeName>
        <fullName evidence="9">Endothelial differentiation inhibitory protein D10</fullName>
    </alternativeName>
    <alternativeName>
        <fullName evidence="11">Protein-L-histidine N-tele-methyltransferase</fullName>
    </alternativeName>
    <alternativeName>
        <fullName evidence="11">SET domain-containing protein 3</fullName>
    </alternativeName>
</protein>
<sequence>MGKKSRVKTQKSGTGATATVSPKEILNLTSELLQKCSSPAPSPGKEWEEYTQIRALVEKIRKKQKGLSVTFDGKREDYFPDLMKWASENGASVEGFEMVNFKEEGFGLRATRDIKAEELFLWVPRKLLMTVESAKNSVLGPLYSQDRILQAMGNIALAFHLLCERASPNSFWQPYIQTLPSEYDTPLYFEEEEVRCLQSTQAIHDVFSQYKNTARQYAYFYKVIQTHPHANKLPLKESFTYEDYRWAVSSVMTRQNQIPTEDGSRVTLALIPLWDMCNHTNGLITTGYNLEDDRCECVALQDFQAGDQIYIFYGTRSNAEFVIHSGFFFDNNSHDRVKIKLGVSKSDRLYAMKAEVLARAGIPTSSVFALHSTEPPISAQLLAFLRVFCMTEEELKEHLLGDSAIDRIFTLGNAEFPVSWDNEVKLWTFLEDRASLLLKTYKTTIEEDKIVLKNPDLSVRATMAIKLRLGEKEILEKAVKSAAVNREYYRKHMEERAPLPRYEESDLGLLEGGVGDSRLPLVLRKLEEEAGVQESLSLTETVSKVKAAENGLVNGENLIPNGTRSENESLSPEESENVTGEESSGSMAKVKERL</sequence>
<name>SETD3_MOUSE</name>
<evidence type="ECO:0000250" key="1">
    <source>
        <dbReference type="UniProtKB" id="Q86TU7"/>
    </source>
</evidence>
<evidence type="ECO:0000255" key="2">
    <source>
        <dbReference type="PROSITE-ProRule" id="PRU00190"/>
    </source>
</evidence>
<evidence type="ECO:0000255" key="3">
    <source>
        <dbReference type="PROSITE-ProRule" id="PRU00898"/>
    </source>
</evidence>
<evidence type="ECO:0000256" key="4">
    <source>
        <dbReference type="SAM" id="MobiDB-lite"/>
    </source>
</evidence>
<evidence type="ECO:0000269" key="5">
    <source>
    </source>
</evidence>
<evidence type="ECO:0000269" key="6">
    <source>
    </source>
</evidence>
<evidence type="ECO:0000269" key="7">
    <source>
    </source>
</evidence>
<evidence type="ECO:0000303" key="8">
    <source>
    </source>
</evidence>
<evidence type="ECO:0000303" key="9">
    <source>
    </source>
</evidence>
<evidence type="ECO:0000303" key="10">
    <source>
    </source>
</evidence>
<evidence type="ECO:0000305" key="11"/>
<evidence type="ECO:0000312" key="12">
    <source>
        <dbReference type="MGI" id="MGI:1289184"/>
    </source>
</evidence>
<dbReference type="EC" id="2.1.1.85" evidence="6"/>
<dbReference type="EMBL" id="AY513271">
    <property type="protein sequence ID" value="AAS82953.1"/>
    <property type="molecule type" value="mRNA"/>
</dbReference>
<dbReference type="EMBL" id="AK011993">
    <property type="protein sequence ID" value="BAB27964.1"/>
    <property type="molecule type" value="mRNA"/>
</dbReference>
<dbReference type="EMBL" id="AK029403">
    <property type="protein sequence ID" value="BAC26435.1"/>
    <property type="molecule type" value="mRNA"/>
</dbReference>
<dbReference type="EMBL" id="AK031017">
    <property type="protein sequence ID" value="BAC27215.1"/>
    <property type="molecule type" value="mRNA"/>
</dbReference>
<dbReference type="EMBL" id="AK031371">
    <property type="protein sequence ID" value="BAC27371.1"/>
    <property type="molecule type" value="mRNA"/>
</dbReference>
<dbReference type="EMBL" id="AK146777">
    <property type="protein sequence ID" value="BAE27425.1"/>
    <property type="molecule type" value="mRNA"/>
</dbReference>
<dbReference type="EMBL" id="AK166570">
    <property type="protein sequence ID" value="BAE38861.1"/>
    <property type="molecule type" value="mRNA"/>
</dbReference>
<dbReference type="EMBL" id="BC016123">
    <property type="protein sequence ID" value="AAH16123.1"/>
    <property type="molecule type" value="mRNA"/>
</dbReference>
<dbReference type="EMBL" id="BC019973">
    <property type="protein sequence ID" value="AAH19973.1"/>
    <property type="molecule type" value="mRNA"/>
</dbReference>
<dbReference type="EMBL" id="BC057968">
    <property type="protein sequence ID" value="AAH57968.1"/>
    <property type="molecule type" value="mRNA"/>
</dbReference>
<dbReference type="CCDS" id="CCDS26159.1">
    <molecule id="Q91WC0-1"/>
</dbReference>
<dbReference type="RefSeq" id="NP_001351199.1">
    <molecule id="Q91WC0-2"/>
    <property type="nucleotide sequence ID" value="NM_001364270.1"/>
</dbReference>
<dbReference type="RefSeq" id="NP_082538.2">
    <molecule id="Q91WC0-1"/>
    <property type="nucleotide sequence ID" value="NM_028262.3"/>
</dbReference>
<dbReference type="RefSeq" id="XP_006516144.4">
    <molecule id="Q91WC0-2"/>
    <property type="nucleotide sequence ID" value="XM_006516081.4"/>
</dbReference>
<dbReference type="RefSeq" id="XP_006516146.1">
    <property type="nucleotide sequence ID" value="XM_006516083.3"/>
</dbReference>
<dbReference type="SMR" id="Q91WC0"/>
<dbReference type="BioGRID" id="206736">
    <property type="interactions" value="8"/>
</dbReference>
<dbReference type="FunCoup" id="Q91WC0">
    <property type="interactions" value="2246"/>
</dbReference>
<dbReference type="IntAct" id="Q91WC0">
    <property type="interactions" value="6"/>
</dbReference>
<dbReference type="STRING" id="10090.ENSMUSP00000066413"/>
<dbReference type="GlyGen" id="Q91WC0">
    <property type="glycosylation" value="2 sites, 2 N-linked glycans (2 sites)"/>
</dbReference>
<dbReference type="iPTMnet" id="Q91WC0"/>
<dbReference type="PhosphoSitePlus" id="Q91WC0"/>
<dbReference type="SwissPalm" id="Q91WC0"/>
<dbReference type="jPOST" id="Q91WC0"/>
<dbReference type="PaxDb" id="10090-ENSMUSP00000066413"/>
<dbReference type="PeptideAtlas" id="Q91WC0"/>
<dbReference type="ProteomicsDB" id="257123">
    <molecule id="Q91WC0-1"/>
</dbReference>
<dbReference type="ProteomicsDB" id="257124">
    <molecule id="Q91WC0-2"/>
</dbReference>
<dbReference type="ProteomicsDB" id="257125">
    <molecule id="Q91WC0-3"/>
</dbReference>
<dbReference type="ProteomicsDB" id="257126">
    <molecule id="Q91WC0-4"/>
</dbReference>
<dbReference type="Pumba" id="Q91WC0"/>
<dbReference type="Antibodypedia" id="147">
    <property type="antibodies" value="168 antibodies from 25 providers"/>
</dbReference>
<dbReference type="DNASU" id="52690"/>
<dbReference type="Ensembl" id="ENSMUST00000071095.14">
    <molecule id="Q91WC0-1"/>
    <property type="protein sequence ID" value="ENSMUSP00000066413.8"/>
    <property type="gene ID" value="ENSMUSG00000056770.16"/>
</dbReference>
<dbReference type="GeneID" id="52690"/>
<dbReference type="KEGG" id="mmu:52690"/>
<dbReference type="UCSC" id="uc007ozj.2">
    <molecule id="Q91WC0-1"/>
    <property type="organism name" value="mouse"/>
</dbReference>
<dbReference type="UCSC" id="uc007ozk.2">
    <molecule id="Q91WC0-2"/>
    <property type="organism name" value="mouse"/>
</dbReference>
<dbReference type="UCSC" id="uc007ozl.2">
    <molecule id="Q91WC0-4"/>
    <property type="organism name" value="mouse"/>
</dbReference>
<dbReference type="AGR" id="MGI:1289184"/>
<dbReference type="CTD" id="84193"/>
<dbReference type="MGI" id="MGI:1289184">
    <property type="gene designation" value="Setd3"/>
</dbReference>
<dbReference type="VEuPathDB" id="HostDB:ENSMUSG00000056770"/>
<dbReference type="eggNOG" id="KOG1337">
    <property type="taxonomic scope" value="Eukaryota"/>
</dbReference>
<dbReference type="GeneTree" id="ENSGT00940000153577"/>
<dbReference type="HOGENOM" id="CLU_028272_0_0_1"/>
<dbReference type="InParanoid" id="Q91WC0"/>
<dbReference type="OMA" id="QHIDGIF"/>
<dbReference type="OrthoDB" id="441812at2759"/>
<dbReference type="PhylomeDB" id="Q91WC0"/>
<dbReference type="TreeFam" id="TF354226"/>
<dbReference type="Reactome" id="R-MMU-3214841">
    <property type="pathway name" value="PKMTs methylate histone lysines"/>
</dbReference>
<dbReference type="BioGRID-ORCS" id="52690">
    <property type="hits" value="3 hits in 82 CRISPR screens"/>
</dbReference>
<dbReference type="ChiTaRS" id="Setd3">
    <property type="organism name" value="mouse"/>
</dbReference>
<dbReference type="PRO" id="PR:Q91WC0"/>
<dbReference type="Proteomes" id="UP000000589">
    <property type="component" value="Chromosome 12"/>
</dbReference>
<dbReference type="RNAct" id="Q91WC0">
    <property type="molecule type" value="protein"/>
</dbReference>
<dbReference type="Bgee" id="ENSMUSG00000056770">
    <property type="expression patterns" value="Expressed in hindlimb stylopod muscle and 63 other cell types or tissues"/>
</dbReference>
<dbReference type="ExpressionAtlas" id="Q91WC0">
    <property type="expression patterns" value="baseline and differential"/>
</dbReference>
<dbReference type="GO" id="GO:0000785">
    <property type="term" value="C:chromatin"/>
    <property type="evidence" value="ECO:0000314"/>
    <property type="project" value="MGI"/>
</dbReference>
<dbReference type="GO" id="GO:0005737">
    <property type="term" value="C:cytoplasm"/>
    <property type="evidence" value="ECO:0000250"/>
    <property type="project" value="UniProtKB"/>
</dbReference>
<dbReference type="GO" id="GO:0005634">
    <property type="term" value="C:nucleus"/>
    <property type="evidence" value="ECO:0007669"/>
    <property type="project" value="UniProtKB-SubCell"/>
</dbReference>
<dbReference type="GO" id="GO:0003779">
    <property type="term" value="F:actin binding"/>
    <property type="evidence" value="ECO:0007669"/>
    <property type="project" value="UniProtKB-KW"/>
</dbReference>
<dbReference type="GO" id="GO:0046975">
    <property type="term" value="F:histone H3K36 methyltransferase activity"/>
    <property type="evidence" value="ECO:0000314"/>
    <property type="project" value="MGI"/>
</dbReference>
<dbReference type="GO" id="GO:0042800">
    <property type="term" value="F:histone H3K4 methyltransferase activity"/>
    <property type="evidence" value="ECO:0000314"/>
    <property type="project" value="MGI"/>
</dbReference>
<dbReference type="GO" id="GO:0018064">
    <property type="term" value="F:protein-L-histidine N-tele-methyltransferase activity"/>
    <property type="evidence" value="ECO:0000315"/>
    <property type="project" value="UniProtKB"/>
</dbReference>
<dbReference type="GO" id="GO:0061629">
    <property type="term" value="F:RNA polymerase II-specific DNA-binding transcription factor binding"/>
    <property type="evidence" value="ECO:0000353"/>
    <property type="project" value="MGI"/>
</dbReference>
<dbReference type="GO" id="GO:0003713">
    <property type="term" value="F:transcription coactivator activity"/>
    <property type="evidence" value="ECO:0000250"/>
    <property type="project" value="UniProtKB"/>
</dbReference>
<dbReference type="GO" id="GO:0030047">
    <property type="term" value="P:actin modification"/>
    <property type="evidence" value="ECO:0000315"/>
    <property type="project" value="UniProtKB"/>
</dbReference>
<dbReference type="GO" id="GO:0018021">
    <property type="term" value="P:peptidyl-histidine methylation"/>
    <property type="evidence" value="ECO:0000315"/>
    <property type="project" value="UniProtKB"/>
</dbReference>
<dbReference type="GO" id="GO:0045893">
    <property type="term" value="P:positive regulation of DNA-templated transcription"/>
    <property type="evidence" value="ECO:0000250"/>
    <property type="project" value="UniProtKB"/>
</dbReference>
<dbReference type="GO" id="GO:0051149">
    <property type="term" value="P:positive regulation of muscle cell differentiation"/>
    <property type="evidence" value="ECO:0000315"/>
    <property type="project" value="MGI"/>
</dbReference>
<dbReference type="GO" id="GO:0045944">
    <property type="term" value="P:positive regulation of transcription by RNA polymerase II"/>
    <property type="evidence" value="ECO:0000314"/>
    <property type="project" value="MGI"/>
</dbReference>
<dbReference type="GO" id="GO:0070472">
    <property type="term" value="P:regulation of uterine smooth muscle contraction"/>
    <property type="evidence" value="ECO:0000315"/>
    <property type="project" value="UniProtKB"/>
</dbReference>
<dbReference type="CDD" id="cd19176">
    <property type="entry name" value="SET_SETD3"/>
    <property type="match status" value="1"/>
</dbReference>
<dbReference type="FunFam" id="3.90.1410.10:FF:000001">
    <property type="entry name" value="histone-lysine N-methyltransferase setd3 isoform X1"/>
    <property type="match status" value="1"/>
</dbReference>
<dbReference type="FunFam" id="3.90.1420.10:FF:000001">
    <property type="entry name" value="histone-lysine N-methyltransferase setd3 isoform X1"/>
    <property type="match status" value="1"/>
</dbReference>
<dbReference type="Gene3D" id="3.90.1420.10">
    <property type="entry name" value="Rubisco LSMT, substrate-binding domain"/>
    <property type="match status" value="1"/>
</dbReference>
<dbReference type="Gene3D" id="3.90.1410.10">
    <property type="entry name" value="set domain protein methyltransferase, domain 1"/>
    <property type="match status" value="1"/>
</dbReference>
<dbReference type="InterPro" id="IPR015353">
    <property type="entry name" value="Rubisco_LSMT_subst-bd"/>
</dbReference>
<dbReference type="InterPro" id="IPR036464">
    <property type="entry name" value="Rubisco_LSMT_subst-bd_sf"/>
</dbReference>
<dbReference type="InterPro" id="IPR001214">
    <property type="entry name" value="SET_dom"/>
</dbReference>
<dbReference type="InterPro" id="IPR046341">
    <property type="entry name" value="SET_dom_sf"/>
</dbReference>
<dbReference type="InterPro" id="IPR025785">
    <property type="entry name" value="SETD3"/>
</dbReference>
<dbReference type="InterPro" id="IPR044428">
    <property type="entry name" value="SETD3_SET"/>
</dbReference>
<dbReference type="InterPro" id="IPR050600">
    <property type="entry name" value="SETD3_SETD6_MTase"/>
</dbReference>
<dbReference type="PANTHER" id="PTHR13271:SF47">
    <property type="entry name" value="ACTIN-HISTIDINE N-METHYLTRANSFERASE"/>
    <property type="match status" value="1"/>
</dbReference>
<dbReference type="PANTHER" id="PTHR13271">
    <property type="entry name" value="UNCHARACTERIZED PUTATIVE METHYLTRANSFERASE"/>
    <property type="match status" value="1"/>
</dbReference>
<dbReference type="Pfam" id="PF09273">
    <property type="entry name" value="Rubis-subs-bind"/>
    <property type="match status" value="1"/>
</dbReference>
<dbReference type="Pfam" id="PF00856">
    <property type="entry name" value="SET"/>
    <property type="match status" value="1"/>
</dbReference>
<dbReference type="SUPFAM" id="SSF81822">
    <property type="entry name" value="RuBisCo LSMT C-terminal, substrate-binding domain"/>
    <property type="match status" value="1"/>
</dbReference>
<dbReference type="SUPFAM" id="SSF82199">
    <property type="entry name" value="SET domain"/>
    <property type="match status" value="1"/>
</dbReference>
<dbReference type="PROSITE" id="PS51565">
    <property type="entry name" value="SAM_MT85_SETD3"/>
    <property type="match status" value="1"/>
</dbReference>
<dbReference type="PROSITE" id="PS50280">
    <property type="entry name" value="SET"/>
    <property type="match status" value="1"/>
</dbReference>
<accession>Q91WC0</accession>
<accession>Q6PEN3</accession>
<accession>Q8CD86</accession>
<accession>Q8CDX8</accession>
<accession>Q9CZZ1</accession>
<reference key="1">
    <citation type="journal article" date="2005" name="DNA Cell Biol.">
        <title>Differentially expressed genes in endothelial differentiation.</title>
        <authorList>
            <person name="Ishii H."/>
            <person name="Mimori K."/>
            <person name="Mori M."/>
            <person name="Vecchione A."/>
        </authorList>
    </citation>
    <scope>NUCLEOTIDE SEQUENCE [MRNA] (ISOFORM 1)</scope>
    <source>
        <tissue>Embryonic stem cell</tissue>
    </source>
</reference>
<reference key="2">
    <citation type="journal article" date="2005" name="Science">
        <title>The transcriptional landscape of the mammalian genome.</title>
        <authorList>
            <person name="Carninci P."/>
            <person name="Kasukawa T."/>
            <person name="Katayama S."/>
            <person name="Gough J."/>
            <person name="Frith M.C."/>
            <person name="Maeda N."/>
            <person name="Oyama R."/>
            <person name="Ravasi T."/>
            <person name="Lenhard B."/>
            <person name="Wells C."/>
            <person name="Kodzius R."/>
            <person name="Shimokawa K."/>
            <person name="Bajic V.B."/>
            <person name="Brenner S.E."/>
            <person name="Batalov S."/>
            <person name="Forrest A.R."/>
            <person name="Zavolan M."/>
            <person name="Davis M.J."/>
            <person name="Wilming L.G."/>
            <person name="Aidinis V."/>
            <person name="Allen J.E."/>
            <person name="Ambesi-Impiombato A."/>
            <person name="Apweiler R."/>
            <person name="Aturaliya R.N."/>
            <person name="Bailey T.L."/>
            <person name="Bansal M."/>
            <person name="Baxter L."/>
            <person name="Beisel K.W."/>
            <person name="Bersano T."/>
            <person name="Bono H."/>
            <person name="Chalk A.M."/>
            <person name="Chiu K.P."/>
            <person name="Choudhary V."/>
            <person name="Christoffels A."/>
            <person name="Clutterbuck D.R."/>
            <person name="Crowe M.L."/>
            <person name="Dalla E."/>
            <person name="Dalrymple B.P."/>
            <person name="de Bono B."/>
            <person name="Della Gatta G."/>
            <person name="di Bernardo D."/>
            <person name="Down T."/>
            <person name="Engstrom P."/>
            <person name="Fagiolini M."/>
            <person name="Faulkner G."/>
            <person name="Fletcher C.F."/>
            <person name="Fukushima T."/>
            <person name="Furuno M."/>
            <person name="Futaki S."/>
            <person name="Gariboldi M."/>
            <person name="Georgii-Hemming P."/>
            <person name="Gingeras T.R."/>
            <person name="Gojobori T."/>
            <person name="Green R.E."/>
            <person name="Gustincich S."/>
            <person name="Harbers M."/>
            <person name="Hayashi Y."/>
            <person name="Hensch T.K."/>
            <person name="Hirokawa N."/>
            <person name="Hill D."/>
            <person name="Huminiecki L."/>
            <person name="Iacono M."/>
            <person name="Ikeo K."/>
            <person name="Iwama A."/>
            <person name="Ishikawa T."/>
            <person name="Jakt M."/>
            <person name="Kanapin A."/>
            <person name="Katoh M."/>
            <person name="Kawasawa Y."/>
            <person name="Kelso J."/>
            <person name="Kitamura H."/>
            <person name="Kitano H."/>
            <person name="Kollias G."/>
            <person name="Krishnan S.P."/>
            <person name="Kruger A."/>
            <person name="Kummerfeld S.K."/>
            <person name="Kurochkin I.V."/>
            <person name="Lareau L.F."/>
            <person name="Lazarevic D."/>
            <person name="Lipovich L."/>
            <person name="Liu J."/>
            <person name="Liuni S."/>
            <person name="McWilliam S."/>
            <person name="Madan Babu M."/>
            <person name="Madera M."/>
            <person name="Marchionni L."/>
            <person name="Matsuda H."/>
            <person name="Matsuzawa S."/>
            <person name="Miki H."/>
            <person name="Mignone F."/>
            <person name="Miyake S."/>
            <person name="Morris K."/>
            <person name="Mottagui-Tabar S."/>
            <person name="Mulder N."/>
            <person name="Nakano N."/>
            <person name="Nakauchi H."/>
            <person name="Ng P."/>
            <person name="Nilsson R."/>
            <person name="Nishiguchi S."/>
            <person name="Nishikawa S."/>
            <person name="Nori F."/>
            <person name="Ohara O."/>
            <person name="Okazaki Y."/>
            <person name="Orlando V."/>
            <person name="Pang K.C."/>
            <person name="Pavan W.J."/>
            <person name="Pavesi G."/>
            <person name="Pesole G."/>
            <person name="Petrovsky N."/>
            <person name="Piazza S."/>
            <person name="Reed J."/>
            <person name="Reid J.F."/>
            <person name="Ring B.Z."/>
            <person name="Ringwald M."/>
            <person name="Rost B."/>
            <person name="Ruan Y."/>
            <person name="Salzberg S.L."/>
            <person name="Sandelin A."/>
            <person name="Schneider C."/>
            <person name="Schoenbach C."/>
            <person name="Sekiguchi K."/>
            <person name="Semple C.A."/>
            <person name="Seno S."/>
            <person name="Sessa L."/>
            <person name="Sheng Y."/>
            <person name="Shibata Y."/>
            <person name="Shimada H."/>
            <person name="Shimada K."/>
            <person name="Silva D."/>
            <person name="Sinclair B."/>
            <person name="Sperling S."/>
            <person name="Stupka E."/>
            <person name="Sugiura K."/>
            <person name="Sultana R."/>
            <person name="Takenaka Y."/>
            <person name="Taki K."/>
            <person name="Tammoja K."/>
            <person name="Tan S.L."/>
            <person name="Tang S."/>
            <person name="Taylor M.S."/>
            <person name="Tegner J."/>
            <person name="Teichmann S.A."/>
            <person name="Ueda H.R."/>
            <person name="van Nimwegen E."/>
            <person name="Verardo R."/>
            <person name="Wei C.L."/>
            <person name="Yagi K."/>
            <person name="Yamanishi H."/>
            <person name="Zabarovsky E."/>
            <person name="Zhu S."/>
            <person name="Zimmer A."/>
            <person name="Hide W."/>
            <person name="Bult C."/>
            <person name="Grimmond S.M."/>
            <person name="Teasdale R.D."/>
            <person name="Liu E.T."/>
            <person name="Brusic V."/>
            <person name="Quackenbush J."/>
            <person name="Wahlestedt C."/>
            <person name="Mattick J.S."/>
            <person name="Hume D.A."/>
            <person name="Kai C."/>
            <person name="Sasaki D."/>
            <person name="Tomaru Y."/>
            <person name="Fukuda S."/>
            <person name="Kanamori-Katayama M."/>
            <person name="Suzuki M."/>
            <person name="Aoki J."/>
            <person name="Arakawa T."/>
            <person name="Iida J."/>
            <person name="Imamura K."/>
            <person name="Itoh M."/>
            <person name="Kato T."/>
            <person name="Kawaji H."/>
            <person name="Kawagashira N."/>
            <person name="Kawashima T."/>
            <person name="Kojima M."/>
            <person name="Kondo S."/>
            <person name="Konno H."/>
            <person name="Nakano K."/>
            <person name="Ninomiya N."/>
            <person name="Nishio T."/>
            <person name="Okada M."/>
            <person name="Plessy C."/>
            <person name="Shibata K."/>
            <person name="Shiraki T."/>
            <person name="Suzuki S."/>
            <person name="Tagami M."/>
            <person name="Waki K."/>
            <person name="Watahiki A."/>
            <person name="Okamura-Oho Y."/>
            <person name="Suzuki H."/>
            <person name="Kawai J."/>
            <person name="Hayashizaki Y."/>
        </authorList>
    </citation>
    <scope>NUCLEOTIDE SEQUENCE [LARGE SCALE MRNA] (ISOFORMS 1; 3 AND 4)</scope>
    <source>
        <strain>C57BL/6J</strain>
        <tissue>Head</tissue>
        <tissue>Stomach</tissue>
        <tissue>Testis</tissue>
        <tissue>Thymus</tissue>
    </source>
</reference>
<reference key="3">
    <citation type="journal article" date="2004" name="Genome Res.">
        <title>The status, quality, and expansion of the NIH full-length cDNA project: the Mammalian Gene Collection (MGC).</title>
        <authorList>
            <consortium name="The MGC Project Team"/>
        </authorList>
    </citation>
    <scope>NUCLEOTIDE SEQUENCE [LARGE SCALE MRNA] (ISOFORMS 1 AND 2)</scope>
    <source>
        <strain>FVB/N</strain>
        <strain>NMRI</strain>
        <tissue>Eye</tissue>
        <tissue>Liver</tissue>
        <tissue>Mammary tumor</tissue>
    </source>
</reference>
<reference key="4">
    <citation type="journal article" date="2010" name="Cell">
        <title>A tissue-specific atlas of mouse protein phosphorylation and expression.</title>
        <authorList>
            <person name="Huttlin E.L."/>
            <person name="Jedrychowski M.P."/>
            <person name="Elias J.E."/>
            <person name="Goswami T."/>
            <person name="Rad R."/>
            <person name="Beausoleil S.A."/>
            <person name="Villen J."/>
            <person name="Haas W."/>
            <person name="Sowa M.E."/>
            <person name="Gygi S.P."/>
        </authorList>
    </citation>
    <scope>IDENTIFICATION BY MASS SPECTROMETRY [LARGE SCALE ANALYSIS]</scope>
    <source>
        <tissue>Brain</tissue>
        <tissue>Heart</tissue>
        <tissue>Kidney</tissue>
        <tissue>Liver</tissue>
        <tissue>Lung</tissue>
        <tissue>Pancreas</tissue>
        <tissue>Spleen</tissue>
        <tissue>Testis</tissue>
    </source>
</reference>
<reference key="5">
    <citation type="journal article" date="2011" name="J. Biol. Chem.">
        <title>Histone methyltransferase SETD3 regulates muscle differentiation.</title>
        <authorList>
            <person name="Eom G.H."/>
            <person name="Kim K.B."/>
            <person name="Kim J.H."/>
            <person name="Kim J.Y."/>
            <person name="Kim J.R."/>
            <person name="Kee H.J."/>
            <person name="Kim D.W."/>
            <person name="Choe N."/>
            <person name="Park H.J."/>
            <person name="Son H.J."/>
            <person name="Choi S.Y."/>
            <person name="Kook H."/>
            <person name="Seo S.B."/>
        </authorList>
    </citation>
    <scope>TISSUE SPECIFICITY</scope>
    <scope>SUBCELLULAR LOCATION</scope>
    <scope>INTERACTION WITH MYOD1</scope>
</reference>
<reference key="6">
    <citation type="journal article" date="2019" name="Nature">
        <title>SETD3 is an actin histidine methyltransferase that prevents primary dystocia.</title>
        <authorList>
            <person name="Wilkinson A.W."/>
            <person name="Diep J."/>
            <person name="Dai S."/>
            <person name="Liu S."/>
            <person name="Ooi Y.S."/>
            <person name="Song D."/>
            <person name="Li T.M."/>
            <person name="Horton J.R."/>
            <person name="Zhang X."/>
            <person name="Liu C."/>
            <person name="Trivedi D.V."/>
            <person name="Ruppel K.M."/>
            <person name="Vilches-Moure J.G."/>
            <person name="Casey K.M."/>
            <person name="Mak J."/>
            <person name="Cowan T."/>
            <person name="Elias J.E."/>
            <person name="Nagamine C.M."/>
            <person name="Spudich J.A."/>
            <person name="Cheng X."/>
            <person name="Carette J.E."/>
            <person name="Gozani O."/>
        </authorList>
    </citation>
    <scope>FUNCTION</scope>
    <scope>CATALYTIC ACTIVITY</scope>
    <scope>DISRUPTION PHENOTYPE</scope>
</reference>
<reference key="7">
    <citation type="journal article" date="2019" name="Cell Death Dis.">
        <title>MiR-15b and miR-322 inhibit SETD3 expression to repress muscle cell differentiation.</title>
        <authorList>
            <person name="Zhao M.J."/>
            <person name="Xie J."/>
            <person name="Shu W.J."/>
            <person name="Wang H.Y."/>
            <person name="Bi J."/>
            <person name="Jiang W."/>
            <person name="Du H.N."/>
        </authorList>
    </citation>
    <scope>INDUCTION</scope>
</reference>
<keyword id="KW-0009">Actin-binding</keyword>
<keyword id="KW-0025">Alternative splicing</keyword>
<keyword id="KW-0963">Cytoplasm</keyword>
<keyword id="KW-0489">Methyltransferase</keyword>
<keyword id="KW-0539">Nucleus</keyword>
<keyword id="KW-0597">Phosphoprotein</keyword>
<keyword id="KW-1185">Reference proteome</keyword>
<keyword id="KW-0949">S-adenosyl-L-methionine</keyword>
<keyword id="KW-0808">Transferase</keyword>
<keyword id="KW-0832">Ubl conjugation</keyword>
<proteinExistence type="evidence at protein level"/>
<gene>
    <name evidence="12" type="primary">Setd3</name>
    <name evidence="12" type="synonym">D12Ertd771e</name>
</gene>
<feature type="chain" id="PRO_0000254176" description="Actin-histidine N-methyltransferase">
    <location>
        <begin position="1"/>
        <end position="594"/>
    </location>
</feature>
<feature type="domain" description="SET" evidence="2">
    <location>
        <begin position="94"/>
        <end position="314"/>
    </location>
</feature>
<feature type="region of interest" description="Disordered" evidence="4">
    <location>
        <begin position="1"/>
        <end position="22"/>
    </location>
</feature>
<feature type="region of interest" description="Disordered" evidence="4">
    <location>
        <begin position="551"/>
        <end position="594"/>
    </location>
</feature>
<feature type="compositionally biased region" description="Polar residues" evidence="4">
    <location>
        <begin position="10"/>
        <end position="20"/>
    </location>
</feature>
<feature type="binding site" evidence="1">
    <location>
        <position position="75"/>
    </location>
    <ligand>
        <name>S-adenosyl-L-methionine</name>
        <dbReference type="ChEBI" id="CHEBI:59789"/>
    </ligand>
</feature>
<feature type="binding site" evidence="1">
    <location>
        <begin position="104"/>
        <end position="106"/>
    </location>
    <ligand>
        <name>S-adenosyl-L-methionine</name>
        <dbReference type="ChEBI" id="CHEBI:59789"/>
    </ligand>
</feature>
<feature type="binding site" evidence="1">
    <location>
        <position position="254"/>
    </location>
    <ligand>
        <name>S-adenosyl-L-methionine</name>
        <dbReference type="ChEBI" id="CHEBI:59789"/>
    </ligand>
</feature>
<feature type="binding site" evidence="1">
    <location>
        <begin position="275"/>
        <end position="279"/>
    </location>
    <ligand>
        <name>S-adenosyl-L-methionine</name>
        <dbReference type="ChEBI" id="CHEBI:59789"/>
    </ligand>
</feature>
<feature type="binding site" evidence="1">
    <location>
        <begin position="325"/>
        <end position="327"/>
    </location>
    <ligand>
        <name>S-adenosyl-L-methionine</name>
        <dbReference type="ChEBI" id="CHEBI:59789"/>
    </ligand>
</feature>
<feature type="splice variant" id="VSP_021194" description="In isoform 3." evidence="10">
    <location>
        <begin position="1"/>
        <end position="351"/>
    </location>
</feature>
<feature type="splice variant" id="VSP_021195" description="In isoform 2 and isoform 4." evidence="8 10">
    <location>
        <begin position="1"/>
        <end position="128"/>
    </location>
</feature>
<feature type="splice variant" id="VSP_021196" description="In isoform 2." evidence="8">
    <location>
        <begin position="226"/>
        <end position="283"/>
    </location>
</feature>
<feature type="splice variant" id="VSP_021197" description="In isoform 4." evidence="10">
    <original>ITTGYNL</original>
    <variation>VKISSWG</variation>
    <location>
        <begin position="284"/>
        <end position="290"/>
    </location>
</feature>
<feature type="splice variant" id="VSP_021198" description="In isoform 4." evidence="10">
    <location>
        <begin position="291"/>
        <end position="594"/>
    </location>
</feature>
<feature type="sequence conflict" description="In Ref. 1; AAS82953 and 2; BAB27964." evidence="11" ref="1 2">
    <original>F</original>
    <variation>S</variation>
    <location>
        <position position="321"/>
    </location>
</feature>
<feature type="sequence conflict" description="In Ref. 2; BAC27215." evidence="11" ref="2">
    <original>R</original>
    <variation>Q</variation>
    <location>
        <position position="460"/>
    </location>
</feature>
<organism>
    <name type="scientific">Mus musculus</name>
    <name type="common">Mouse</name>
    <dbReference type="NCBI Taxonomy" id="10090"/>
    <lineage>
        <taxon>Eukaryota</taxon>
        <taxon>Metazoa</taxon>
        <taxon>Chordata</taxon>
        <taxon>Craniata</taxon>
        <taxon>Vertebrata</taxon>
        <taxon>Euteleostomi</taxon>
        <taxon>Mammalia</taxon>
        <taxon>Eutheria</taxon>
        <taxon>Euarchontoglires</taxon>
        <taxon>Glires</taxon>
        <taxon>Rodentia</taxon>
        <taxon>Myomorpha</taxon>
        <taxon>Muroidea</taxon>
        <taxon>Muridae</taxon>
        <taxon>Murinae</taxon>
        <taxon>Mus</taxon>
        <taxon>Mus</taxon>
    </lineage>
</organism>